<evidence type="ECO:0000255" key="1">
    <source>
        <dbReference type="HAMAP-Rule" id="MF_01318"/>
    </source>
</evidence>
<evidence type="ECO:0000305" key="2"/>
<gene>
    <name evidence="1" type="primary">rplA</name>
    <name type="ordered locus">SeAg_B4392</name>
</gene>
<sequence length="234" mass="24729">MAKLTKRMRVIREKVDATKQYDINEAIALLKELATAKFNESVDVAVNLGIDARKSDQNVRGATVLPHGTGRSVRVAVFTQGPNAEAAKAAGAELVGMEDLADQIKKGEMNFDVVIASPDAMRVVGQLGQVLGPRGLMPNPKVGTVTPNVAEAVKNAKAGQVRYRNDKNGIIHTTIGKVDFDADKLKENLEALLVALKKAKPSQAKGVYIKKVSISTTMGAGVAVDQAGLSASAN</sequence>
<name>RL1_SALA4</name>
<comment type="function">
    <text evidence="1">Binds directly to 23S rRNA. The L1 stalk is quite mobile in the ribosome, and is involved in E site tRNA release.</text>
</comment>
<comment type="function">
    <text evidence="1">Protein L1 is also a translational repressor protein, it controls the translation of the L11 operon by binding to its mRNA.</text>
</comment>
<comment type="subunit">
    <text evidence="1">Part of the 50S ribosomal subunit.</text>
</comment>
<comment type="similarity">
    <text evidence="1">Belongs to the universal ribosomal protein uL1 family.</text>
</comment>
<accession>B5F0W4</accession>
<keyword id="KW-0678">Repressor</keyword>
<keyword id="KW-0687">Ribonucleoprotein</keyword>
<keyword id="KW-0689">Ribosomal protein</keyword>
<keyword id="KW-0694">RNA-binding</keyword>
<keyword id="KW-0699">rRNA-binding</keyword>
<keyword id="KW-0810">Translation regulation</keyword>
<keyword id="KW-0820">tRNA-binding</keyword>
<protein>
    <recommendedName>
        <fullName evidence="1">Large ribosomal subunit protein uL1</fullName>
    </recommendedName>
    <alternativeName>
        <fullName evidence="2">50S ribosomal protein L1</fullName>
    </alternativeName>
</protein>
<organism>
    <name type="scientific">Salmonella agona (strain SL483)</name>
    <dbReference type="NCBI Taxonomy" id="454166"/>
    <lineage>
        <taxon>Bacteria</taxon>
        <taxon>Pseudomonadati</taxon>
        <taxon>Pseudomonadota</taxon>
        <taxon>Gammaproteobacteria</taxon>
        <taxon>Enterobacterales</taxon>
        <taxon>Enterobacteriaceae</taxon>
        <taxon>Salmonella</taxon>
    </lineage>
</organism>
<dbReference type="EMBL" id="CP001138">
    <property type="protein sequence ID" value="ACH49128.1"/>
    <property type="molecule type" value="Genomic_DNA"/>
</dbReference>
<dbReference type="RefSeq" id="WP_001096676.1">
    <property type="nucleotide sequence ID" value="NC_011149.1"/>
</dbReference>
<dbReference type="SMR" id="B5F0W4"/>
<dbReference type="KEGG" id="sea:SeAg_B4392"/>
<dbReference type="HOGENOM" id="CLU_062853_0_0_6"/>
<dbReference type="Proteomes" id="UP000008819">
    <property type="component" value="Chromosome"/>
</dbReference>
<dbReference type="GO" id="GO:0022625">
    <property type="term" value="C:cytosolic large ribosomal subunit"/>
    <property type="evidence" value="ECO:0007669"/>
    <property type="project" value="TreeGrafter"/>
</dbReference>
<dbReference type="GO" id="GO:0019843">
    <property type="term" value="F:rRNA binding"/>
    <property type="evidence" value="ECO:0007669"/>
    <property type="project" value="UniProtKB-UniRule"/>
</dbReference>
<dbReference type="GO" id="GO:0003735">
    <property type="term" value="F:structural constituent of ribosome"/>
    <property type="evidence" value="ECO:0007669"/>
    <property type="project" value="InterPro"/>
</dbReference>
<dbReference type="GO" id="GO:0000049">
    <property type="term" value="F:tRNA binding"/>
    <property type="evidence" value="ECO:0007669"/>
    <property type="project" value="UniProtKB-KW"/>
</dbReference>
<dbReference type="GO" id="GO:0006417">
    <property type="term" value="P:regulation of translation"/>
    <property type="evidence" value="ECO:0007669"/>
    <property type="project" value="UniProtKB-KW"/>
</dbReference>
<dbReference type="GO" id="GO:0006412">
    <property type="term" value="P:translation"/>
    <property type="evidence" value="ECO:0007669"/>
    <property type="project" value="UniProtKB-UniRule"/>
</dbReference>
<dbReference type="CDD" id="cd00403">
    <property type="entry name" value="Ribosomal_L1"/>
    <property type="match status" value="1"/>
</dbReference>
<dbReference type="FunFam" id="3.40.50.790:FF:000001">
    <property type="entry name" value="50S ribosomal protein L1"/>
    <property type="match status" value="1"/>
</dbReference>
<dbReference type="Gene3D" id="3.30.190.20">
    <property type="match status" value="1"/>
</dbReference>
<dbReference type="Gene3D" id="3.40.50.790">
    <property type="match status" value="1"/>
</dbReference>
<dbReference type="HAMAP" id="MF_01318_B">
    <property type="entry name" value="Ribosomal_uL1_B"/>
    <property type="match status" value="1"/>
</dbReference>
<dbReference type="InterPro" id="IPR005878">
    <property type="entry name" value="Ribosom_uL1_bac-type"/>
</dbReference>
<dbReference type="InterPro" id="IPR002143">
    <property type="entry name" value="Ribosomal_uL1"/>
</dbReference>
<dbReference type="InterPro" id="IPR023674">
    <property type="entry name" value="Ribosomal_uL1-like"/>
</dbReference>
<dbReference type="InterPro" id="IPR028364">
    <property type="entry name" value="Ribosomal_uL1/biogenesis"/>
</dbReference>
<dbReference type="InterPro" id="IPR016095">
    <property type="entry name" value="Ribosomal_uL1_3-a/b-sand"/>
</dbReference>
<dbReference type="InterPro" id="IPR023673">
    <property type="entry name" value="Ribosomal_uL1_CS"/>
</dbReference>
<dbReference type="NCBIfam" id="TIGR01169">
    <property type="entry name" value="rplA_bact"/>
    <property type="match status" value="1"/>
</dbReference>
<dbReference type="PANTHER" id="PTHR36427">
    <property type="entry name" value="54S RIBOSOMAL PROTEIN L1, MITOCHONDRIAL"/>
    <property type="match status" value="1"/>
</dbReference>
<dbReference type="PANTHER" id="PTHR36427:SF3">
    <property type="entry name" value="LARGE RIBOSOMAL SUBUNIT PROTEIN UL1M"/>
    <property type="match status" value="1"/>
</dbReference>
<dbReference type="Pfam" id="PF00687">
    <property type="entry name" value="Ribosomal_L1"/>
    <property type="match status" value="1"/>
</dbReference>
<dbReference type="PIRSF" id="PIRSF002155">
    <property type="entry name" value="Ribosomal_L1"/>
    <property type="match status" value="1"/>
</dbReference>
<dbReference type="SUPFAM" id="SSF56808">
    <property type="entry name" value="Ribosomal protein L1"/>
    <property type="match status" value="1"/>
</dbReference>
<dbReference type="PROSITE" id="PS01199">
    <property type="entry name" value="RIBOSOMAL_L1"/>
    <property type="match status" value="1"/>
</dbReference>
<feature type="chain" id="PRO_1000141452" description="Large ribosomal subunit protein uL1">
    <location>
        <begin position="1"/>
        <end position="234"/>
    </location>
</feature>
<reference key="1">
    <citation type="journal article" date="2011" name="J. Bacteriol.">
        <title>Comparative genomics of 28 Salmonella enterica isolates: evidence for CRISPR-mediated adaptive sublineage evolution.</title>
        <authorList>
            <person name="Fricke W.F."/>
            <person name="Mammel M.K."/>
            <person name="McDermott P.F."/>
            <person name="Tartera C."/>
            <person name="White D.G."/>
            <person name="Leclerc J.E."/>
            <person name="Ravel J."/>
            <person name="Cebula T.A."/>
        </authorList>
    </citation>
    <scope>NUCLEOTIDE SEQUENCE [LARGE SCALE GENOMIC DNA]</scope>
    <source>
        <strain>SL483</strain>
    </source>
</reference>
<proteinExistence type="inferred from homology"/>